<proteinExistence type="inferred from homology"/>
<gene>
    <name evidence="1" type="primary">rpoZ</name>
    <name type="ordered locus">Krad_2991</name>
</gene>
<comment type="function">
    <text evidence="1">Promotes RNA polymerase assembly. Latches the N- and C-terminal regions of the beta' subunit thereby facilitating its interaction with the beta and alpha subunits.</text>
</comment>
<comment type="catalytic activity">
    <reaction evidence="1">
        <text>RNA(n) + a ribonucleoside 5'-triphosphate = RNA(n+1) + diphosphate</text>
        <dbReference type="Rhea" id="RHEA:21248"/>
        <dbReference type="Rhea" id="RHEA-COMP:14527"/>
        <dbReference type="Rhea" id="RHEA-COMP:17342"/>
        <dbReference type="ChEBI" id="CHEBI:33019"/>
        <dbReference type="ChEBI" id="CHEBI:61557"/>
        <dbReference type="ChEBI" id="CHEBI:140395"/>
        <dbReference type="EC" id="2.7.7.6"/>
    </reaction>
</comment>
<comment type="subunit">
    <text evidence="1">The RNAP catalytic core consists of 2 alpha, 1 beta, 1 beta' and 1 omega subunit. When a sigma factor is associated with the core the holoenzyme is formed, which can initiate transcription.</text>
</comment>
<comment type="similarity">
    <text evidence="1">Belongs to the RNA polymerase subunit omega family.</text>
</comment>
<accession>A6WCB6</accession>
<reference key="1">
    <citation type="journal article" date="2008" name="PLoS ONE">
        <title>Survival in nuclear waste, extreme resistance, and potential applications gleaned from the genome sequence of Kineococcus radiotolerans SRS30216.</title>
        <authorList>
            <person name="Bagwell C.E."/>
            <person name="Bhat S."/>
            <person name="Hawkins G.M."/>
            <person name="Smith B.W."/>
            <person name="Biswas T."/>
            <person name="Hoover T.R."/>
            <person name="Saunders E."/>
            <person name="Han C.S."/>
            <person name="Tsodikov O.V."/>
            <person name="Shimkets L.J."/>
        </authorList>
    </citation>
    <scope>NUCLEOTIDE SEQUENCE [LARGE SCALE GENOMIC DNA]</scope>
    <source>
        <strain>ATCC BAA-149 / DSM 14245 / SRS30216</strain>
    </source>
</reference>
<keyword id="KW-0240">DNA-directed RNA polymerase</keyword>
<keyword id="KW-0548">Nucleotidyltransferase</keyword>
<keyword id="KW-1185">Reference proteome</keyword>
<keyword id="KW-0804">Transcription</keyword>
<keyword id="KW-0808">Transferase</keyword>
<name>RPOZ_KINRD</name>
<feature type="chain" id="PRO_1000079633" description="DNA-directed RNA polymerase subunit omega">
    <location>
        <begin position="1"/>
        <end position="88"/>
    </location>
</feature>
<protein>
    <recommendedName>
        <fullName evidence="1">DNA-directed RNA polymerase subunit omega</fullName>
        <shortName evidence="1">RNAP omega subunit</shortName>
        <ecNumber evidence="1">2.7.7.6</ecNumber>
    </recommendedName>
    <alternativeName>
        <fullName evidence="1">RNA polymerase omega subunit</fullName>
    </alternativeName>
    <alternativeName>
        <fullName evidence="1">Transcriptase subunit omega</fullName>
    </alternativeName>
</protein>
<evidence type="ECO:0000255" key="1">
    <source>
        <dbReference type="HAMAP-Rule" id="MF_00366"/>
    </source>
</evidence>
<dbReference type="EC" id="2.7.7.6" evidence="1"/>
<dbReference type="EMBL" id="CP000750">
    <property type="protein sequence ID" value="ABS04455.1"/>
    <property type="molecule type" value="Genomic_DNA"/>
</dbReference>
<dbReference type="RefSeq" id="WP_012087298.1">
    <property type="nucleotide sequence ID" value="NC_009664.2"/>
</dbReference>
<dbReference type="SMR" id="A6WCB6"/>
<dbReference type="STRING" id="266940.Krad_2991"/>
<dbReference type="KEGG" id="kra:Krad_2991"/>
<dbReference type="eggNOG" id="COG1758">
    <property type="taxonomic scope" value="Bacteria"/>
</dbReference>
<dbReference type="HOGENOM" id="CLU_125406_1_1_11"/>
<dbReference type="OrthoDB" id="8481372at2"/>
<dbReference type="Proteomes" id="UP000001116">
    <property type="component" value="Chromosome"/>
</dbReference>
<dbReference type="GO" id="GO:0000428">
    <property type="term" value="C:DNA-directed RNA polymerase complex"/>
    <property type="evidence" value="ECO:0007669"/>
    <property type="project" value="UniProtKB-KW"/>
</dbReference>
<dbReference type="GO" id="GO:0003677">
    <property type="term" value="F:DNA binding"/>
    <property type="evidence" value="ECO:0007669"/>
    <property type="project" value="UniProtKB-UniRule"/>
</dbReference>
<dbReference type="GO" id="GO:0003899">
    <property type="term" value="F:DNA-directed RNA polymerase activity"/>
    <property type="evidence" value="ECO:0007669"/>
    <property type="project" value="UniProtKB-UniRule"/>
</dbReference>
<dbReference type="GO" id="GO:0006351">
    <property type="term" value="P:DNA-templated transcription"/>
    <property type="evidence" value="ECO:0007669"/>
    <property type="project" value="UniProtKB-UniRule"/>
</dbReference>
<dbReference type="Gene3D" id="3.90.940.10">
    <property type="match status" value="1"/>
</dbReference>
<dbReference type="HAMAP" id="MF_00366">
    <property type="entry name" value="RNApol_bact_RpoZ"/>
    <property type="match status" value="1"/>
</dbReference>
<dbReference type="InterPro" id="IPR003716">
    <property type="entry name" value="DNA-dir_RNA_pol_omega"/>
</dbReference>
<dbReference type="InterPro" id="IPR006110">
    <property type="entry name" value="Pol_omega/Rpo6/RPB6"/>
</dbReference>
<dbReference type="InterPro" id="IPR036161">
    <property type="entry name" value="RPB6/omega-like_sf"/>
</dbReference>
<dbReference type="NCBIfam" id="TIGR00690">
    <property type="entry name" value="rpoZ"/>
    <property type="match status" value="1"/>
</dbReference>
<dbReference type="PANTHER" id="PTHR34476">
    <property type="entry name" value="DNA-DIRECTED RNA POLYMERASE SUBUNIT OMEGA"/>
    <property type="match status" value="1"/>
</dbReference>
<dbReference type="PANTHER" id="PTHR34476:SF1">
    <property type="entry name" value="DNA-DIRECTED RNA POLYMERASE SUBUNIT OMEGA"/>
    <property type="match status" value="1"/>
</dbReference>
<dbReference type="Pfam" id="PF01192">
    <property type="entry name" value="RNA_pol_Rpb6"/>
    <property type="match status" value="1"/>
</dbReference>
<dbReference type="SMART" id="SM01409">
    <property type="entry name" value="RNA_pol_Rpb6"/>
    <property type="match status" value="1"/>
</dbReference>
<dbReference type="SUPFAM" id="SSF63562">
    <property type="entry name" value="RPB6/omega subunit-like"/>
    <property type="match status" value="1"/>
</dbReference>
<organism>
    <name type="scientific">Kineococcus radiotolerans (strain ATCC BAA-149 / DSM 14245 / SRS30216)</name>
    <dbReference type="NCBI Taxonomy" id="266940"/>
    <lineage>
        <taxon>Bacteria</taxon>
        <taxon>Bacillati</taxon>
        <taxon>Actinomycetota</taxon>
        <taxon>Actinomycetes</taxon>
        <taxon>Kineosporiales</taxon>
        <taxon>Kineosporiaceae</taxon>
        <taxon>Kineococcus</taxon>
    </lineage>
</organism>
<sequence length="88" mass="9533">MAGTVASPEGITNPPIDDLLTAADSKYALVIYAAKRARQINAYYSQLGEGLLEYVGPLVETHVQEKALSVAMREINEGLLTSEPIEQQ</sequence>